<comment type="similarity">
    <text evidence="1">Belongs to the bacterial ribosomal protein bL36 family.</text>
</comment>
<proteinExistence type="inferred from homology"/>
<evidence type="ECO:0000255" key="1">
    <source>
        <dbReference type="HAMAP-Rule" id="MF_00251"/>
    </source>
</evidence>
<evidence type="ECO:0000305" key="2"/>
<dbReference type="EMBL" id="CP000814">
    <property type="protein sequence ID" value="ABV53090.1"/>
    <property type="molecule type" value="Genomic_DNA"/>
</dbReference>
<dbReference type="RefSeq" id="WP_002781429.1">
    <property type="nucleotide sequence ID" value="NC_009839.1"/>
</dbReference>
<dbReference type="SMR" id="A8FNQ3"/>
<dbReference type="GeneID" id="98394726"/>
<dbReference type="KEGG" id="cju:C8J_1493"/>
<dbReference type="HOGENOM" id="CLU_135723_6_2_7"/>
<dbReference type="GO" id="GO:0005737">
    <property type="term" value="C:cytoplasm"/>
    <property type="evidence" value="ECO:0007669"/>
    <property type="project" value="UniProtKB-ARBA"/>
</dbReference>
<dbReference type="GO" id="GO:1990904">
    <property type="term" value="C:ribonucleoprotein complex"/>
    <property type="evidence" value="ECO:0007669"/>
    <property type="project" value="UniProtKB-KW"/>
</dbReference>
<dbReference type="GO" id="GO:0005840">
    <property type="term" value="C:ribosome"/>
    <property type="evidence" value="ECO:0007669"/>
    <property type="project" value="UniProtKB-KW"/>
</dbReference>
<dbReference type="GO" id="GO:0003735">
    <property type="term" value="F:structural constituent of ribosome"/>
    <property type="evidence" value="ECO:0007669"/>
    <property type="project" value="InterPro"/>
</dbReference>
<dbReference type="GO" id="GO:0006412">
    <property type="term" value="P:translation"/>
    <property type="evidence" value="ECO:0007669"/>
    <property type="project" value="UniProtKB-UniRule"/>
</dbReference>
<dbReference type="HAMAP" id="MF_00251">
    <property type="entry name" value="Ribosomal_bL36"/>
    <property type="match status" value="1"/>
</dbReference>
<dbReference type="InterPro" id="IPR000473">
    <property type="entry name" value="Ribosomal_bL36"/>
</dbReference>
<dbReference type="InterPro" id="IPR035977">
    <property type="entry name" value="Ribosomal_bL36_sp"/>
</dbReference>
<dbReference type="NCBIfam" id="TIGR01022">
    <property type="entry name" value="rpmJ_bact"/>
    <property type="match status" value="1"/>
</dbReference>
<dbReference type="PANTHER" id="PTHR42888">
    <property type="entry name" value="50S RIBOSOMAL PROTEIN L36, CHLOROPLASTIC"/>
    <property type="match status" value="1"/>
</dbReference>
<dbReference type="PANTHER" id="PTHR42888:SF1">
    <property type="entry name" value="LARGE RIBOSOMAL SUBUNIT PROTEIN BL36C"/>
    <property type="match status" value="1"/>
</dbReference>
<dbReference type="Pfam" id="PF00444">
    <property type="entry name" value="Ribosomal_L36"/>
    <property type="match status" value="1"/>
</dbReference>
<dbReference type="SUPFAM" id="SSF57840">
    <property type="entry name" value="Ribosomal protein L36"/>
    <property type="match status" value="1"/>
</dbReference>
<dbReference type="PROSITE" id="PS00828">
    <property type="entry name" value="RIBOSOMAL_L36"/>
    <property type="match status" value="1"/>
</dbReference>
<sequence>MKVRPSVKKMCDKCKVVRRKGVVRIICENPKHKQRQG</sequence>
<organism>
    <name type="scientific">Campylobacter jejuni subsp. jejuni serotype O:6 (strain 81116 / NCTC 11828)</name>
    <dbReference type="NCBI Taxonomy" id="407148"/>
    <lineage>
        <taxon>Bacteria</taxon>
        <taxon>Pseudomonadati</taxon>
        <taxon>Campylobacterota</taxon>
        <taxon>Epsilonproteobacteria</taxon>
        <taxon>Campylobacterales</taxon>
        <taxon>Campylobacteraceae</taxon>
        <taxon>Campylobacter</taxon>
    </lineage>
</organism>
<name>RL36_CAMJ8</name>
<keyword id="KW-0687">Ribonucleoprotein</keyword>
<keyword id="KW-0689">Ribosomal protein</keyword>
<gene>
    <name evidence="1" type="primary">rpmJ</name>
    <name type="ordered locus">C8J_1493</name>
</gene>
<protein>
    <recommendedName>
        <fullName evidence="1">Large ribosomal subunit protein bL36</fullName>
    </recommendedName>
    <alternativeName>
        <fullName evidence="2">50S ribosomal protein L36</fullName>
    </alternativeName>
</protein>
<accession>A8FNQ3</accession>
<feature type="chain" id="PRO_1000071860" description="Large ribosomal subunit protein bL36">
    <location>
        <begin position="1"/>
        <end position="37"/>
    </location>
</feature>
<reference key="1">
    <citation type="journal article" date="2007" name="J. Bacteriol.">
        <title>The complete genome sequence of Campylobacter jejuni strain 81116 (NCTC11828).</title>
        <authorList>
            <person name="Pearson B.M."/>
            <person name="Gaskin D.J.H."/>
            <person name="Segers R.P.A.M."/>
            <person name="Wells J.M."/>
            <person name="Nuijten P.J.M."/>
            <person name="van Vliet A.H.M."/>
        </authorList>
    </citation>
    <scope>NUCLEOTIDE SEQUENCE [LARGE SCALE GENOMIC DNA]</scope>
    <source>
        <strain>81116 / NCTC 11828</strain>
    </source>
</reference>